<evidence type="ECO:0000255" key="1"/>
<evidence type="ECO:0000256" key="2">
    <source>
        <dbReference type="SAM" id="MobiDB-lite"/>
    </source>
</evidence>
<evidence type="ECO:0000305" key="3"/>
<reference key="1">
    <citation type="submission" date="2004-11" db="EMBL/GenBank/DDBJ databases">
        <authorList>
            <consortium name="The German cDNA consortium"/>
        </authorList>
    </citation>
    <scope>NUCLEOTIDE SEQUENCE [LARGE SCALE MRNA]</scope>
    <source>
        <tissue>Brain cortex</tissue>
    </source>
</reference>
<keyword id="KW-0175">Coiled coil</keyword>
<keyword id="KW-1185">Reference proteome</keyword>
<gene>
    <name type="primary">ZC2HC1C</name>
    <name type="synonym">FAM164C</name>
</gene>
<name>ZC21C_PONAB</name>
<organism>
    <name type="scientific">Pongo abelii</name>
    <name type="common">Sumatran orangutan</name>
    <name type="synonym">Pongo pygmaeus abelii</name>
    <dbReference type="NCBI Taxonomy" id="9601"/>
    <lineage>
        <taxon>Eukaryota</taxon>
        <taxon>Metazoa</taxon>
        <taxon>Chordata</taxon>
        <taxon>Craniata</taxon>
        <taxon>Vertebrata</taxon>
        <taxon>Euteleostomi</taxon>
        <taxon>Mammalia</taxon>
        <taxon>Eutheria</taxon>
        <taxon>Euarchontoglires</taxon>
        <taxon>Primates</taxon>
        <taxon>Haplorrhini</taxon>
        <taxon>Catarrhini</taxon>
        <taxon>Hominidae</taxon>
        <taxon>Pongo</taxon>
    </lineage>
</organism>
<comment type="similarity">
    <text evidence="3">Belongs to the ZC2HC1 family.</text>
</comment>
<accession>Q5R498</accession>
<dbReference type="EMBL" id="CR861358">
    <property type="protein sequence ID" value="CAH93418.1"/>
    <property type="molecule type" value="mRNA"/>
</dbReference>
<dbReference type="RefSeq" id="NP_001127662.1">
    <property type="nucleotide sequence ID" value="NM_001134190.1"/>
</dbReference>
<dbReference type="SMR" id="Q5R498"/>
<dbReference type="STRING" id="9601.ENSPPYP00000006822"/>
<dbReference type="GeneID" id="100174744"/>
<dbReference type="KEGG" id="pon:100174744"/>
<dbReference type="CTD" id="79696"/>
<dbReference type="eggNOG" id="KOG3940">
    <property type="taxonomic scope" value="Eukaryota"/>
</dbReference>
<dbReference type="InParanoid" id="Q5R498"/>
<dbReference type="OrthoDB" id="10255185at2759"/>
<dbReference type="Proteomes" id="UP000001595">
    <property type="component" value="Unplaced"/>
</dbReference>
<dbReference type="InterPro" id="IPR026104">
    <property type="entry name" value="ZNF_C2HC_dom_1C"/>
</dbReference>
<dbReference type="PANTHER" id="PTHR14649">
    <property type="entry name" value="ZINC FINGER C2HC DOMAIN-CONTAINING PROTEIN 1C"/>
    <property type="match status" value="1"/>
</dbReference>
<dbReference type="PANTHER" id="PTHR14649:SF1">
    <property type="entry name" value="ZINC FINGER C2HC DOMAIN-CONTAINING PROTEIN 1C"/>
    <property type="match status" value="1"/>
</dbReference>
<feature type="chain" id="PRO_0000089943" description="Zinc finger C2HC domain-containing protein 1C homolog">
    <location>
        <begin position="1"/>
        <end position="389"/>
    </location>
</feature>
<feature type="region of interest" description="Disordered" evidence="2">
    <location>
        <begin position="16"/>
        <end position="44"/>
    </location>
</feature>
<feature type="region of interest" description="Disordered" evidence="2">
    <location>
        <begin position="84"/>
        <end position="115"/>
    </location>
</feature>
<feature type="region of interest" description="Disordered" evidence="2">
    <location>
        <begin position="301"/>
        <end position="320"/>
    </location>
</feature>
<feature type="region of interest" description="Disordered" evidence="2">
    <location>
        <begin position="343"/>
        <end position="389"/>
    </location>
</feature>
<feature type="coiled-coil region" evidence="1">
    <location>
        <begin position="211"/>
        <end position="266"/>
    </location>
</feature>
<feature type="compositionally biased region" description="Polar residues" evidence="2">
    <location>
        <begin position="35"/>
        <end position="44"/>
    </location>
</feature>
<feature type="compositionally biased region" description="Polar residues" evidence="2">
    <location>
        <begin position="90"/>
        <end position="102"/>
    </location>
</feature>
<feature type="compositionally biased region" description="Polar residues" evidence="2">
    <location>
        <begin position="307"/>
        <end position="317"/>
    </location>
</feature>
<feature type="compositionally biased region" description="Low complexity" evidence="2">
    <location>
        <begin position="368"/>
        <end position="382"/>
    </location>
</feature>
<sequence length="389" mass="44084">MAGLQRLASHLPVGVMLPHNTTEAPGPHSAKQDSYEQGDSSQQSLKGHLRNNFQKQLLSNKELTLDKVYTHPKWNTHTKARSYSYPHCTGISQQDPESDSQGQGKGLFYSSGPQSWYPKANNQDFIPFTKKRVGVDRAYPLKPVVHRKSCSTGEAGTDGYHNVYPRPPEPREFSSRNFGVRNQGNFSVVGTVLAAMQAEKAVANFDRTEWVQIRRLEAAGESLEEEIRRKQILLRGKLKKTEEELRRIQMQKEQAKENENRELQKIILPRSRVKGNNSNTMYKPIFSPEFEFEEEFSRDRREDETWGRSQQNSSPFQLSDYRIQRLKRERLVASNNKIQDRVSELSVEKFSLPSETPGGALQGSARNSSLSMAPDSSGSSGSIEEPQLG</sequence>
<protein>
    <recommendedName>
        <fullName>Zinc finger C2HC domain-containing protein 1C homolog</fullName>
    </recommendedName>
</protein>
<proteinExistence type="evidence at transcript level"/>